<sequence length="88" mass="9345">MVLLINYAVSLVSAIVVGAVLGMKLSFDMDSFEGSVLFPTPFVAIGLTALIGYLITLDLVSSIIIGIFASVFSKFTNKIFPGVNNDIN</sequence>
<protein>
    <recommendedName>
        <fullName>Probable [NiFe]-hydrogenase-type-3 Eha complex membrane subunit A</fullName>
    </recommendedName>
</protein>
<name>EHAA_METMP</name>
<comment type="function">
    <text evidence="1">One of the integral membrane subunits of multisubunit membrane-bound [NiFe]-hydrogenase eha. Eha is predicted to form large electron transfer complex and might catalyze energy-driven reduction of low-potential redox carriers (By similarity).</text>
</comment>
<comment type="subunit">
    <text evidence="1">Putative multisubunit membrane-bound [NiFe]-hydrogenase eha is composed of at least 20 subunits.</text>
</comment>
<comment type="subcellular location">
    <subcellularLocation>
        <location evidence="3">Cell membrane</location>
        <topology evidence="3">Multi-pass membrane protein</topology>
    </subcellularLocation>
</comment>
<comment type="similarity">
    <text evidence="3">Belongs to the EhaA family.</text>
</comment>
<gene>
    <name type="primary">ehaA</name>
    <name type="ordered locus">MMP1448</name>
</gene>
<reference key="1">
    <citation type="journal article" date="2004" name="J. Bacteriol.">
        <title>Complete genome sequence of the genetically tractable hydrogenotrophic methanogen Methanococcus maripaludis.</title>
        <authorList>
            <person name="Hendrickson E.L."/>
            <person name="Kaul R."/>
            <person name="Zhou Y."/>
            <person name="Bovee D."/>
            <person name="Chapman P."/>
            <person name="Chung J."/>
            <person name="Conway de Macario E."/>
            <person name="Dodsworth J.A."/>
            <person name="Gillett W."/>
            <person name="Graham D.E."/>
            <person name="Hackett M."/>
            <person name="Haydock A.K."/>
            <person name="Kang A."/>
            <person name="Land M.L."/>
            <person name="Levy R."/>
            <person name="Lie T.J."/>
            <person name="Major T.A."/>
            <person name="Moore B.C."/>
            <person name="Porat I."/>
            <person name="Palmeiri A."/>
            <person name="Rouse G."/>
            <person name="Saenphimmachak C."/>
            <person name="Soell D."/>
            <person name="Van Dien S."/>
            <person name="Wang T."/>
            <person name="Whitman W.B."/>
            <person name="Xia Q."/>
            <person name="Zhang Y."/>
            <person name="Larimer F.W."/>
            <person name="Olson M.V."/>
            <person name="Leigh J.A."/>
        </authorList>
    </citation>
    <scope>NUCLEOTIDE SEQUENCE [LARGE SCALE GENOMIC DNA]</scope>
    <source>
        <strain>DSM 14266 / JCM 13030 / NBRC 101832 / S2 / LL</strain>
    </source>
</reference>
<dbReference type="EMBL" id="BX950229">
    <property type="protein sequence ID" value="CAF31004.1"/>
    <property type="molecule type" value="Genomic_DNA"/>
</dbReference>
<dbReference type="RefSeq" id="WP_011171392.1">
    <property type="nucleotide sequence ID" value="NC_005791.1"/>
</dbReference>
<dbReference type="SMR" id="Q6LXA4"/>
<dbReference type="STRING" id="267377.MMP1448"/>
<dbReference type="EnsemblBacteria" id="CAF31004">
    <property type="protein sequence ID" value="CAF31004"/>
    <property type="gene ID" value="MMP1448"/>
</dbReference>
<dbReference type="GeneID" id="41280079"/>
<dbReference type="KEGG" id="mmp:MMP1448"/>
<dbReference type="PATRIC" id="fig|267377.15.peg.1484"/>
<dbReference type="eggNOG" id="arCOG05035">
    <property type="taxonomic scope" value="Archaea"/>
</dbReference>
<dbReference type="HOGENOM" id="CLU_174516_1_0_2"/>
<dbReference type="OrthoDB" id="81652at2157"/>
<dbReference type="Proteomes" id="UP000000590">
    <property type="component" value="Chromosome"/>
</dbReference>
<dbReference type="GO" id="GO:0005886">
    <property type="term" value="C:plasma membrane"/>
    <property type="evidence" value="ECO:0007669"/>
    <property type="project" value="UniProtKB-SubCell"/>
</dbReference>
<dbReference type="InterPro" id="IPR011306">
    <property type="entry name" value="Prd_NiFe_hyd_3_EhaA"/>
</dbReference>
<dbReference type="Pfam" id="PF17367">
    <property type="entry name" value="NiFe_hyd_3_EhaA"/>
    <property type="match status" value="1"/>
</dbReference>
<dbReference type="PIRSF" id="PIRSF005019">
    <property type="entry name" value="EhaA"/>
    <property type="match status" value="1"/>
</dbReference>
<evidence type="ECO:0000250" key="1"/>
<evidence type="ECO:0000255" key="2"/>
<evidence type="ECO:0000305" key="3"/>
<organism>
    <name type="scientific">Methanococcus maripaludis (strain DSM 14266 / JCM 13030 / NBRC 101832 / S2 / LL)</name>
    <dbReference type="NCBI Taxonomy" id="267377"/>
    <lineage>
        <taxon>Archaea</taxon>
        <taxon>Methanobacteriati</taxon>
        <taxon>Methanobacteriota</taxon>
        <taxon>Methanomada group</taxon>
        <taxon>Methanococci</taxon>
        <taxon>Methanococcales</taxon>
        <taxon>Methanococcaceae</taxon>
        <taxon>Methanococcus</taxon>
    </lineage>
</organism>
<keyword id="KW-1003">Cell membrane</keyword>
<keyword id="KW-0472">Membrane</keyword>
<keyword id="KW-1185">Reference proteome</keyword>
<keyword id="KW-0812">Transmembrane</keyword>
<keyword id="KW-1133">Transmembrane helix</keyword>
<proteinExistence type="inferred from homology"/>
<accession>Q6LXA4</accession>
<feature type="chain" id="PRO_0000138113" description="Probable [NiFe]-hydrogenase-type-3 Eha complex membrane subunit A">
    <location>
        <begin position="1"/>
        <end position="88"/>
    </location>
</feature>
<feature type="transmembrane region" description="Helical" evidence="2">
    <location>
        <begin position="1"/>
        <end position="21"/>
    </location>
</feature>
<feature type="transmembrane region" description="Helical" evidence="2">
    <location>
        <begin position="27"/>
        <end position="47"/>
    </location>
</feature>
<feature type="transmembrane region" description="Helical" evidence="2">
    <location>
        <begin position="49"/>
        <end position="69"/>
    </location>
</feature>